<proteinExistence type="inferred from homology"/>
<accession>B2I1H8</accession>
<sequence>MSYFGTDGIRGKFGQMPITPEFALKLGFAAGKVLKRTSPKNKPLVVLGKDTRLSGYILESALQAGLNAAGVYVHLLGPLPTPAIAHLTRALHAHAGIVISASHNPYFDNGIKFFSSEGKKLPDSLQEEINKELEKDLFIEDTANLGKSVRVTDANGRYIEFCKSTFPYHFDLNNLKIVVDCAHGAAYSVGPSVFRELGAKVVALYNEPDGLNINENCGSTHPESLQKAVVEHGADLGIAFDGDADRVVMVDKFGSLIDGDHILYILATQAKNKPAGVVGTVMSNMALEVALEKANVGFVRAKVGDRYVLQALEENGWVTGGEPSGHILTLDKSTTGDAIIAALQVLTVMVEQNKALHELVHDFKLYPQVLVNVRLEQMLDPYSIPALVAEFNKAEEQLKGRGRILIRKSGTEPVIRVMVEGDNEQEVKTLAEHLANAVRSQAQVA</sequence>
<comment type="function">
    <text evidence="1">Catalyzes the conversion of glucosamine-6-phosphate to glucosamine-1-phosphate.</text>
</comment>
<comment type="catalytic activity">
    <reaction evidence="1">
        <text>alpha-D-glucosamine 1-phosphate = D-glucosamine 6-phosphate</text>
        <dbReference type="Rhea" id="RHEA:23424"/>
        <dbReference type="ChEBI" id="CHEBI:58516"/>
        <dbReference type="ChEBI" id="CHEBI:58725"/>
        <dbReference type="EC" id="5.4.2.10"/>
    </reaction>
</comment>
<comment type="cofactor">
    <cofactor evidence="1">
        <name>Mg(2+)</name>
        <dbReference type="ChEBI" id="CHEBI:18420"/>
    </cofactor>
    <text evidence="1">Binds 1 Mg(2+) ion per subunit.</text>
</comment>
<comment type="PTM">
    <text evidence="1">Activated by phosphorylation.</text>
</comment>
<comment type="similarity">
    <text evidence="1">Belongs to the phosphohexose mutase family.</text>
</comment>
<keyword id="KW-0413">Isomerase</keyword>
<keyword id="KW-0460">Magnesium</keyword>
<keyword id="KW-0479">Metal-binding</keyword>
<keyword id="KW-0597">Phosphoprotein</keyword>
<organism>
    <name type="scientific">Acinetobacter baumannii (strain ACICU)</name>
    <dbReference type="NCBI Taxonomy" id="405416"/>
    <lineage>
        <taxon>Bacteria</taxon>
        <taxon>Pseudomonadati</taxon>
        <taxon>Pseudomonadota</taxon>
        <taxon>Gammaproteobacteria</taxon>
        <taxon>Moraxellales</taxon>
        <taxon>Moraxellaceae</taxon>
        <taxon>Acinetobacter</taxon>
        <taxon>Acinetobacter calcoaceticus/baumannii complex</taxon>
    </lineage>
</organism>
<protein>
    <recommendedName>
        <fullName evidence="1">Phosphoglucosamine mutase</fullName>
        <ecNumber evidence="1">5.4.2.10</ecNumber>
    </recommendedName>
</protein>
<reference key="1">
    <citation type="journal article" date="2008" name="Antimicrob. Agents Chemother.">
        <title>Whole-genome pyrosequencing of an epidemic multidrug-resistant Acinetobacter baumannii strain belonging to the European clone II group.</title>
        <authorList>
            <person name="Iacono M."/>
            <person name="Villa L."/>
            <person name="Fortini D."/>
            <person name="Bordoni R."/>
            <person name="Imperi F."/>
            <person name="Bonnal R.J."/>
            <person name="Sicheritz-Ponten T."/>
            <person name="De Bellis G."/>
            <person name="Visca P."/>
            <person name="Cassone A."/>
            <person name="Carattoli A."/>
        </authorList>
    </citation>
    <scope>NUCLEOTIDE SEQUENCE [LARGE SCALE GENOMIC DNA]</scope>
    <source>
        <strain>ACICU</strain>
    </source>
</reference>
<gene>
    <name evidence="1" type="primary">glmM</name>
    <name type="ordered locus">ACICU_03517</name>
</gene>
<name>GLMM_ACIBC</name>
<feature type="chain" id="PRO_1000201050" description="Phosphoglucosamine mutase">
    <location>
        <begin position="1"/>
        <end position="445"/>
    </location>
</feature>
<feature type="active site" description="Phosphoserine intermediate" evidence="1">
    <location>
        <position position="102"/>
    </location>
</feature>
<feature type="binding site" description="via phosphate group" evidence="1">
    <location>
        <position position="102"/>
    </location>
    <ligand>
        <name>Mg(2+)</name>
        <dbReference type="ChEBI" id="CHEBI:18420"/>
    </ligand>
</feature>
<feature type="binding site" evidence="1">
    <location>
        <position position="241"/>
    </location>
    <ligand>
        <name>Mg(2+)</name>
        <dbReference type="ChEBI" id="CHEBI:18420"/>
    </ligand>
</feature>
<feature type="binding site" evidence="1">
    <location>
        <position position="243"/>
    </location>
    <ligand>
        <name>Mg(2+)</name>
        <dbReference type="ChEBI" id="CHEBI:18420"/>
    </ligand>
</feature>
<feature type="binding site" evidence="1">
    <location>
        <position position="245"/>
    </location>
    <ligand>
        <name>Mg(2+)</name>
        <dbReference type="ChEBI" id="CHEBI:18420"/>
    </ligand>
</feature>
<feature type="modified residue" description="Phosphoserine" evidence="1">
    <location>
        <position position="102"/>
    </location>
</feature>
<evidence type="ECO:0000255" key="1">
    <source>
        <dbReference type="HAMAP-Rule" id="MF_01554"/>
    </source>
</evidence>
<dbReference type="EC" id="5.4.2.10" evidence="1"/>
<dbReference type="EMBL" id="CP000863">
    <property type="protein sequence ID" value="ACC58826.1"/>
    <property type="molecule type" value="Genomic_DNA"/>
</dbReference>
<dbReference type="RefSeq" id="WP_000119873.1">
    <property type="nucleotide sequence ID" value="NZ_CP031380.1"/>
</dbReference>
<dbReference type="SMR" id="B2I1H8"/>
<dbReference type="KEGG" id="abc:ACICU_03517"/>
<dbReference type="HOGENOM" id="CLU_016950_7_0_6"/>
<dbReference type="Proteomes" id="UP000008839">
    <property type="component" value="Chromosome"/>
</dbReference>
<dbReference type="GO" id="GO:0005829">
    <property type="term" value="C:cytosol"/>
    <property type="evidence" value="ECO:0007669"/>
    <property type="project" value="TreeGrafter"/>
</dbReference>
<dbReference type="GO" id="GO:0000287">
    <property type="term" value="F:magnesium ion binding"/>
    <property type="evidence" value="ECO:0007669"/>
    <property type="project" value="UniProtKB-UniRule"/>
</dbReference>
<dbReference type="GO" id="GO:0008966">
    <property type="term" value="F:phosphoglucosamine mutase activity"/>
    <property type="evidence" value="ECO:0007669"/>
    <property type="project" value="UniProtKB-UniRule"/>
</dbReference>
<dbReference type="GO" id="GO:0004615">
    <property type="term" value="F:phosphomannomutase activity"/>
    <property type="evidence" value="ECO:0007669"/>
    <property type="project" value="TreeGrafter"/>
</dbReference>
<dbReference type="GO" id="GO:0005975">
    <property type="term" value="P:carbohydrate metabolic process"/>
    <property type="evidence" value="ECO:0007669"/>
    <property type="project" value="InterPro"/>
</dbReference>
<dbReference type="GO" id="GO:0009252">
    <property type="term" value="P:peptidoglycan biosynthetic process"/>
    <property type="evidence" value="ECO:0007669"/>
    <property type="project" value="TreeGrafter"/>
</dbReference>
<dbReference type="GO" id="GO:0006048">
    <property type="term" value="P:UDP-N-acetylglucosamine biosynthetic process"/>
    <property type="evidence" value="ECO:0007669"/>
    <property type="project" value="TreeGrafter"/>
</dbReference>
<dbReference type="CDD" id="cd05802">
    <property type="entry name" value="GlmM"/>
    <property type="match status" value="1"/>
</dbReference>
<dbReference type="FunFam" id="3.30.310.50:FF:000001">
    <property type="entry name" value="Phosphoglucosamine mutase"/>
    <property type="match status" value="1"/>
</dbReference>
<dbReference type="FunFam" id="3.40.120.10:FF:000001">
    <property type="entry name" value="Phosphoglucosamine mutase"/>
    <property type="match status" value="1"/>
</dbReference>
<dbReference type="FunFam" id="3.40.120.10:FF:000003">
    <property type="entry name" value="Phosphoglucosamine mutase"/>
    <property type="match status" value="1"/>
</dbReference>
<dbReference type="Gene3D" id="3.40.120.10">
    <property type="entry name" value="Alpha-D-Glucose-1,6-Bisphosphate, subunit A, domain 3"/>
    <property type="match status" value="3"/>
</dbReference>
<dbReference type="Gene3D" id="3.30.310.50">
    <property type="entry name" value="Alpha-D-phosphohexomutase, C-terminal domain"/>
    <property type="match status" value="1"/>
</dbReference>
<dbReference type="HAMAP" id="MF_01554_B">
    <property type="entry name" value="GlmM_B"/>
    <property type="match status" value="1"/>
</dbReference>
<dbReference type="InterPro" id="IPR005844">
    <property type="entry name" value="A-D-PHexomutase_a/b/a-I"/>
</dbReference>
<dbReference type="InterPro" id="IPR016055">
    <property type="entry name" value="A-D-PHexomutase_a/b/a-I/II/III"/>
</dbReference>
<dbReference type="InterPro" id="IPR005845">
    <property type="entry name" value="A-D-PHexomutase_a/b/a-II"/>
</dbReference>
<dbReference type="InterPro" id="IPR005846">
    <property type="entry name" value="A-D-PHexomutase_a/b/a-III"/>
</dbReference>
<dbReference type="InterPro" id="IPR005843">
    <property type="entry name" value="A-D-PHexomutase_C"/>
</dbReference>
<dbReference type="InterPro" id="IPR036900">
    <property type="entry name" value="A-D-PHexomutase_C_sf"/>
</dbReference>
<dbReference type="InterPro" id="IPR016066">
    <property type="entry name" value="A-D-PHexomutase_CS"/>
</dbReference>
<dbReference type="InterPro" id="IPR005841">
    <property type="entry name" value="Alpha-D-phosphohexomutase_SF"/>
</dbReference>
<dbReference type="InterPro" id="IPR006352">
    <property type="entry name" value="GlmM_bact"/>
</dbReference>
<dbReference type="InterPro" id="IPR050060">
    <property type="entry name" value="Phosphoglucosamine_mutase"/>
</dbReference>
<dbReference type="NCBIfam" id="TIGR01455">
    <property type="entry name" value="glmM"/>
    <property type="match status" value="1"/>
</dbReference>
<dbReference type="NCBIfam" id="NF008139">
    <property type="entry name" value="PRK10887.1"/>
    <property type="match status" value="1"/>
</dbReference>
<dbReference type="PANTHER" id="PTHR42946:SF1">
    <property type="entry name" value="PHOSPHOGLUCOMUTASE (ALPHA-D-GLUCOSE-1,6-BISPHOSPHATE-DEPENDENT)"/>
    <property type="match status" value="1"/>
</dbReference>
<dbReference type="PANTHER" id="PTHR42946">
    <property type="entry name" value="PHOSPHOHEXOSE MUTASE"/>
    <property type="match status" value="1"/>
</dbReference>
<dbReference type="Pfam" id="PF02878">
    <property type="entry name" value="PGM_PMM_I"/>
    <property type="match status" value="1"/>
</dbReference>
<dbReference type="Pfam" id="PF02879">
    <property type="entry name" value="PGM_PMM_II"/>
    <property type="match status" value="1"/>
</dbReference>
<dbReference type="Pfam" id="PF02880">
    <property type="entry name" value="PGM_PMM_III"/>
    <property type="match status" value="1"/>
</dbReference>
<dbReference type="Pfam" id="PF00408">
    <property type="entry name" value="PGM_PMM_IV"/>
    <property type="match status" value="1"/>
</dbReference>
<dbReference type="PRINTS" id="PR00509">
    <property type="entry name" value="PGMPMM"/>
</dbReference>
<dbReference type="SUPFAM" id="SSF55957">
    <property type="entry name" value="Phosphoglucomutase, C-terminal domain"/>
    <property type="match status" value="1"/>
</dbReference>
<dbReference type="SUPFAM" id="SSF53738">
    <property type="entry name" value="Phosphoglucomutase, first 3 domains"/>
    <property type="match status" value="3"/>
</dbReference>
<dbReference type="PROSITE" id="PS00710">
    <property type="entry name" value="PGM_PMM"/>
    <property type="match status" value="1"/>
</dbReference>